<reference key="1">
    <citation type="journal article" date="2005" name="Nucleic Acids Res.">
        <title>The genome sequence of Xanthomonas oryzae pathovar oryzae KACC10331, the bacterial blight pathogen of rice.</title>
        <authorList>
            <person name="Lee B.-M."/>
            <person name="Park Y.-J."/>
            <person name="Park D.-S."/>
            <person name="Kang H.-W."/>
            <person name="Kim J.-G."/>
            <person name="Song E.-S."/>
            <person name="Park I.-C."/>
            <person name="Yoon U.-H."/>
            <person name="Hahn J.-H."/>
            <person name="Koo B.-S."/>
            <person name="Lee G.-B."/>
            <person name="Kim H."/>
            <person name="Park H.-S."/>
            <person name="Yoon K.-O."/>
            <person name="Kim J.-H."/>
            <person name="Jung C.-H."/>
            <person name="Koh N.-H."/>
            <person name="Seo J.-S."/>
            <person name="Go S.-J."/>
        </authorList>
    </citation>
    <scope>NUCLEOTIDE SEQUENCE [LARGE SCALE GENOMIC DNA]</scope>
    <source>
        <strain>KACC10331 / KXO85</strain>
    </source>
</reference>
<organism>
    <name type="scientific">Xanthomonas oryzae pv. oryzae (strain KACC10331 / KXO85)</name>
    <dbReference type="NCBI Taxonomy" id="291331"/>
    <lineage>
        <taxon>Bacteria</taxon>
        <taxon>Pseudomonadati</taxon>
        <taxon>Pseudomonadota</taxon>
        <taxon>Gammaproteobacteria</taxon>
        <taxon>Lysobacterales</taxon>
        <taxon>Lysobacteraceae</taxon>
        <taxon>Xanthomonas</taxon>
    </lineage>
</organism>
<accession>Q5GZR3</accession>
<dbReference type="EMBL" id="AE013598">
    <property type="protein sequence ID" value="AAW75808.1"/>
    <property type="status" value="ALT_INIT"/>
    <property type="molecule type" value="Genomic_DNA"/>
</dbReference>
<dbReference type="BMRB" id="Q5GZR3"/>
<dbReference type="SMR" id="Q5GZR3"/>
<dbReference type="STRING" id="291331.XOO2554"/>
<dbReference type="KEGG" id="xoo:XOO2554"/>
<dbReference type="HOGENOM" id="CLU_134358_2_0_6"/>
<dbReference type="Proteomes" id="UP000006735">
    <property type="component" value="Chromosome"/>
</dbReference>
<dbReference type="GO" id="GO:0030163">
    <property type="term" value="P:protein catabolic process"/>
    <property type="evidence" value="ECO:0007669"/>
    <property type="project" value="InterPro"/>
</dbReference>
<dbReference type="GO" id="GO:0006508">
    <property type="term" value="P:proteolysis"/>
    <property type="evidence" value="ECO:0007669"/>
    <property type="project" value="UniProtKB-UniRule"/>
</dbReference>
<dbReference type="FunFam" id="3.30.1390.10:FF:000002">
    <property type="entry name" value="ATP-dependent Clp protease adapter protein ClpS"/>
    <property type="match status" value="1"/>
</dbReference>
<dbReference type="Gene3D" id="3.30.1390.10">
    <property type="match status" value="1"/>
</dbReference>
<dbReference type="HAMAP" id="MF_00302">
    <property type="entry name" value="ClpS"/>
    <property type="match status" value="1"/>
</dbReference>
<dbReference type="InterPro" id="IPR022935">
    <property type="entry name" value="ClpS"/>
</dbReference>
<dbReference type="InterPro" id="IPR003769">
    <property type="entry name" value="ClpS_core"/>
</dbReference>
<dbReference type="InterPro" id="IPR014719">
    <property type="entry name" value="Ribosomal_bL12_C/ClpS-like"/>
</dbReference>
<dbReference type="NCBIfam" id="NF000669">
    <property type="entry name" value="PRK00033.1-2"/>
    <property type="match status" value="1"/>
</dbReference>
<dbReference type="NCBIfam" id="NF000672">
    <property type="entry name" value="PRK00033.1-5"/>
    <property type="match status" value="1"/>
</dbReference>
<dbReference type="PANTHER" id="PTHR33473:SF19">
    <property type="entry name" value="ATP-DEPENDENT CLP PROTEASE ADAPTER PROTEIN CLPS"/>
    <property type="match status" value="1"/>
</dbReference>
<dbReference type="PANTHER" id="PTHR33473">
    <property type="entry name" value="ATP-DEPENDENT CLP PROTEASE ADAPTER PROTEIN CLPS1, CHLOROPLASTIC"/>
    <property type="match status" value="1"/>
</dbReference>
<dbReference type="Pfam" id="PF02617">
    <property type="entry name" value="ClpS"/>
    <property type="match status" value="1"/>
</dbReference>
<dbReference type="SUPFAM" id="SSF54736">
    <property type="entry name" value="ClpS-like"/>
    <property type="match status" value="1"/>
</dbReference>
<sequence>MPRNTSHEHDHGLMVEASKPEVAPPPRYQVLLLNDDYTPMDFVVTVLEQFFNLNLEQATQIMLHVHTRGRGVCGVYSREVAESKVAQVNEFSRMNQHPLLCTMEQA</sequence>
<proteinExistence type="inferred from homology"/>
<gene>
    <name evidence="1" type="primary">clpS</name>
    <name type="ordered locus">XOO2554</name>
</gene>
<name>CLPS_XANOR</name>
<protein>
    <recommendedName>
        <fullName evidence="1">ATP-dependent Clp protease adapter protein ClpS</fullName>
    </recommendedName>
</protein>
<evidence type="ECO:0000255" key="1">
    <source>
        <dbReference type="HAMAP-Rule" id="MF_00302"/>
    </source>
</evidence>
<evidence type="ECO:0000256" key="2">
    <source>
        <dbReference type="SAM" id="MobiDB-lite"/>
    </source>
</evidence>
<evidence type="ECO:0000305" key="3"/>
<comment type="function">
    <text evidence="1">Involved in the modulation of the specificity of the ClpAP-mediated ATP-dependent protein degradation.</text>
</comment>
<comment type="subunit">
    <text evidence="1">Binds to the N-terminal domain of the chaperone ClpA.</text>
</comment>
<comment type="similarity">
    <text evidence="1">Belongs to the ClpS family.</text>
</comment>
<comment type="sequence caution" evidence="3">
    <conflict type="erroneous initiation">
        <sequence resource="EMBL-CDS" id="AAW75808"/>
    </conflict>
</comment>
<feature type="chain" id="PRO_0000215764" description="ATP-dependent Clp protease adapter protein ClpS">
    <location>
        <begin position="1"/>
        <end position="106"/>
    </location>
</feature>
<feature type="region of interest" description="Disordered" evidence="2">
    <location>
        <begin position="1"/>
        <end position="20"/>
    </location>
</feature>
<feature type="compositionally biased region" description="Basic and acidic residues" evidence="2">
    <location>
        <begin position="1"/>
        <end position="13"/>
    </location>
</feature>
<keyword id="KW-1185">Reference proteome</keyword>